<reference key="1">
    <citation type="submission" date="2008-02" db="EMBL/GenBank/DDBJ databases">
        <title>Complete sequence of Yersinia pseudotuberculosis YPIII.</title>
        <authorList>
            <consortium name="US DOE Joint Genome Institute"/>
            <person name="Copeland A."/>
            <person name="Lucas S."/>
            <person name="Lapidus A."/>
            <person name="Glavina del Rio T."/>
            <person name="Dalin E."/>
            <person name="Tice H."/>
            <person name="Bruce D."/>
            <person name="Goodwin L."/>
            <person name="Pitluck S."/>
            <person name="Munk A.C."/>
            <person name="Brettin T."/>
            <person name="Detter J.C."/>
            <person name="Han C."/>
            <person name="Tapia R."/>
            <person name="Schmutz J."/>
            <person name="Larimer F."/>
            <person name="Land M."/>
            <person name="Hauser L."/>
            <person name="Challacombe J.F."/>
            <person name="Green L."/>
            <person name="Lindler L.E."/>
            <person name="Nikolich M.P."/>
            <person name="Richardson P."/>
        </authorList>
    </citation>
    <scope>NUCLEOTIDE SEQUENCE [LARGE SCALE GENOMIC DNA]</scope>
    <source>
        <strain>YPIII</strain>
    </source>
</reference>
<organism>
    <name type="scientific">Yersinia pseudotuberculosis serotype O:3 (strain YPIII)</name>
    <dbReference type="NCBI Taxonomy" id="502800"/>
    <lineage>
        <taxon>Bacteria</taxon>
        <taxon>Pseudomonadati</taxon>
        <taxon>Pseudomonadota</taxon>
        <taxon>Gammaproteobacteria</taxon>
        <taxon>Enterobacterales</taxon>
        <taxon>Yersiniaceae</taxon>
        <taxon>Yersinia</taxon>
    </lineage>
</organism>
<feature type="chain" id="PRO_5000316240" description="UPF0756 membrane protein YPK_1367">
    <location>
        <begin position="1"/>
        <end position="150"/>
    </location>
</feature>
<feature type="transmembrane region" description="Helical" evidence="1">
    <location>
        <begin position="16"/>
        <end position="36"/>
    </location>
</feature>
<feature type="transmembrane region" description="Helical" evidence="1">
    <location>
        <begin position="51"/>
        <end position="71"/>
    </location>
</feature>
<feature type="transmembrane region" description="Helical" evidence="1">
    <location>
        <begin position="88"/>
        <end position="108"/>
    </location>
</feature>
<feature type="transmembrane region" description="Helical" evidence="1">
    <location>
        <begin position="114"/>
        <end position="134"/>
    </location>
</feature>
<name>Y1367_YERPY</name>
<dbReference type="EMBL" id="CP000950">
    <property type="protein sequence ID" value="ACA67661.1"/>
    <property type="molecule type" value="Genomic_DNA"/>
</dbReference>
<dbReference type="RefSeq" id="WP_002208553.1">
    <property type="nucleotide sequence ID" value="NZ_CP009792.1"/>
</dbReference>
<dbReference type="KEGG" id="ypy:YPK_1367"/>
<dbReference type="PATRIC" id="fig|502800.11.peg.2003"/>
<dbReference type="GO" id="GO:0005886">
    <property type="term" value="C:plasma membrane"/>
    <property type="evidence" value="ECO:0007669"/>
    <property type="project" value="UniProtKB-SubCell"/>
</dbReference>
<dbReference type="HAMAP" id="MF_01874">
    <property type="entry name" value="UPF0756"/>
    <property type="match status" value="1"/>
</dbReference>
<dbReference type="InterPro" id="IPR007382">
    <property type="entry name" value="UPF0756_TM"/>
</dbReference>
<dbReference type="PANTHER" id="PTHR38452">
    <property type="entry name" value="UPF0756 MEMBRANE PROTEIN YEAL"/>
    <property type="match status" value="1"/>
</dbReference>
<dbReference type="PANTHER" id="PTHR38452:SF1">
    <property type="entry name" value="UPF0756 MEMBRANE PROTEIN YEAL"/>
    <property type="match status" value="1"/>
</dbReference>
<dbReference type="Pfam" id="PF04284">
    <property type="entry name" value="DUF441"/>
    <property type="match status" value="1"/>
</dbReference>
<gene>
    <name type="ordered locus">YPK_1367</name>
</gene>
<keyword id="KW-1003">Cell membrane</keyword>
<keyword id="KW-0472">Membrane</keyword>
<keyword id="KW-0812">Transmembrane</keyword>
<keyword id="KW-1133">Transmembrane helix</keyword>
<accession>B1JSH0</accession>
<sequence>MAALDPTLLILLALAALGILSHNMTVTLAILILIAIRITPLNSFFPWVEKYGLTIGVLILTIGVMAPIASGKISASEVLHSFVQWKSILAIVVGVAVSWLGGRGVSLMTHQPSVVAGLLVGTVLGVALFKGVPVGPLIAAGLLSLVIGKS</sequence>
<evidence type="ECO:0000255" key="1">
    <source>
        <dbReference type="HAMAP-Rule" id="MF_01874"/>
    </source>
</evidence>
<proteinExistence type="inferred from homology"/>
<comment type="subcellular location">
    <subcellularLocation>
        <location evidence="1">Cell membrane</location>
        <topology evidence="1">Multi-pass membrane protein</topology>
    </subcellularLocation>
</comment>
<comment type="similarity">
    <text evidence="1">Belongs to the UPF0756 family.</text>
</comment>
<protein>
    <recommendedName>
        <fullName evidence="1">UPF0756 membrane protein YPK_1367</fullName>
    </recommendedName>
</protein>